<comment type="function">
    <text evidence="1">Involved in the de novo purine biosynthesis. Catalyzes the transfer of formate to 5-phospho-ribosyl-glycinamide (GAR), producing 5-phospho-ribosyl-N-formylglycinamide (FGAR). Formate is provided by PurU via hydrolysis of 10-formyl-tetrahydrofolate.</text>
</comment>
<comment type="catalytic activity">
    <reaction evidence="1">
        <text>N(1)-(5-phospho-beta-D-ribosyl)glycinamide + formate + ATP = N(2)-formyl-N(1)-(5-phospho-beta-D-ribosyl)glycinamide + ADP + phosphate + H(+)</text>
        <dbReference type="Rhea" id="RHEA:24829"/>
        <dbReference type="ChEBI" id="CHEBI:15378"/>
        <dbReference type="ChEBI" id="CHEBI:15740"/>
        <dbReference type="ChEBI" id="CHEBI:30616"/>
        <dbReference type="ChEBI" id="CHEBI:43474"/>
        <dbReference type="ChEBI" id="CHEBI:143788"/>
        <dbReference type="ChEBI" id="CHEBI:147286"/>
        <dbReference type="ChEBI" id="CHEBI:456216"/>
        <dbReference type="EC" id="6.3.1.21"/>
    </reaction>
    <physiologicalReaction direction="left-to-right" evidence="1">
        <dbReference type="Rhea" id="RHEA:24830"/>
    </physiologicalReaction>
</comment>
<comment type="pathway">
    <text evidence="1">Purine metabolism; IMP biosynthesis via de novo pathway; N(2)-formyl-N(1)-(5-phospho-D-ribosyl)glycinamide from N(1)-(5-phospho-D-ribosyl)glycinamide (formate route): step 1/1.</text>
</comment>
<comment type="subunit">
    <text evidence="1">Homodimer.</text>
</comment>
<comment type="similarity">
    <text evidence="1">Belongs to the PurK/PurT family.</text>
</comment>
<proteinExistence type="inferred from homology"/>
<gene>
    <name evidence="1" type="primary">purT</name>
    <name type="ordered locus">Z2901</name>
    <name type="ordered locus">ECs2559</name>
</gene>
<reference key="1">
    <citation type="journal article" date="2001" name="Nature">
        <title>Genome sequence of enterohaemorrhagic Escherichia coli O157:H7.</title>
        <authorList>
            <person name="Perna N.T."/>
            <person name="Plunkett G. III"/>
            <person name="Burland V."/>
            <person name="Mau B."/>
            <person name="Glasner J.D."/>
            <person name="Rose D.J."/>
            <person name="Mayhew G.F."/>
            <person name="Evans P.S."/>
            <person name="Gregor J."/>
            <person name="Kirkpatrick H.A."/>
            <person name="Posfai G."/>
            <person name="Hackett J."/>
            <person name="Klink S."/>
            <person name="Boutin A."/>
            <person name="Shao Y."/>
            <person name="Miller L."/>
            <person name="Grotbeck E.J."/>
            <person name="Davis N.W."/>
            <person name="Lim A."/>
            <person name="Dimalanta E.T."/>
            <person name="Potamousis K."/>
            <person name="Apodaca J."/>
            <person name="Anantharaman T.S."/>
            <person name="Lin J."/>
            <person name="Yen G."/>
            <person name="Schwartz D.C."/>
            <person name="Welch R.A."/>
            <person name="Blattner F.R."/>
        </authorList>
    </citation>
    <scope>NUCLEOTIDE SEQUENCE [LARGE SCALE GENOMIC DNA]</scope>
    <source>
        <strain>O157:H7 / EDL933 / ATCC 700927 / EHEC</strain>
    </source>
</reference>
<reference key="2">
    <citation type="journal article" date="2001" name="DNA Res.">
        <title>Complete genome sequence of enterohemorrhagic Escherichia coli O157:H7 and genomic comparison with a laboratory strain K-12.</title>
        <authorList>
            <person name="Hayashi T."/>
            <person name="Makino K."/>
            <person name="Ohnishi M."/>
            <person name="Kurokawa K."/>
            <person name="Ishii K."/>
            <person name="Yokoyama K."/>
            <person name="Han C.-G."/>
            <person name="Ohtsubo E."/>
            <person name="Nakayama K."/>
            <person name="Murata T."/>
            <person name="Tanaka M."/>
            <person name="Tobe T."/>
            <person name="Iida T."/>
            <person name="Takami H."/>
            <person name="Honda T."/>
            <person name="Sasakawa C."/>
            <person name="Ogasawara N."/>
            <person name="Yasunaga T."/>
            <person name="Kuhara S."/>
            <person name="Shiba T."/>
            <person name="Hattori M."/>
            <person name="Shinagawa H."/>
        </authorList>
    </citation>
    <scope>NUCLEOTIDE SEQUENCE [LARGE SCALE GENOMIC DNA]</scope>
    <source>
        <strain>O157:H7 / Sakai / RIMD 0509952 / EHEC</strain>
    </source>
</reference>
<name>PURT_ECO57</name>
<dbReference type="EC" id="6.3.1.21" evidence="1"/>
<dbReference type="EMBL" id="AE005174">
    <property type="protein sequence ID" value="AAG56839.1"/>
    <property type="molecule type" value="Genomic_DNA"/>
</dbReference>
<dbReference type="EMBL" id="BA000007">
    <property type="protein sequence ID" value="BAB35982.1"/>
    <property type="molecule type" value="Genomic_DNA"/>
</dbReference>
<dbReference type="PIR" id="C85797">
    <property type="entry name" value="C85797"/>
</dbReference>
<dbReference type="PIR" id="G90948">
    <property type="entry name" value="G90948"/>
</dbReference>
<dbReference type="RefSeq" id="NP_310586.1">
    <property type="nucleotide sequence ID" value="NC_002695.1"/>
</dbReference>
<dbReference type="RefSeq" id="WP_000173471.1">
    <property type="nucleotide sequence ID" value="NZ_VOAI01000010.1"/>
</dbReference>
<dbReference type="SMR" id="Q8XCJ9"/>
<dbReference type="STRING" id="155864.Z2901"/>
<dbReference type="GeneID" id="912498"/>
<dbReference type="KEGG" id="ece:Z2901"/>
<dbReference type="KEGG" id="ecs:ECs_2559"/>
<dbReference type="PATRIC" id="fig|386585.9.peg.2682"/>
<dbReference type="eggNOG" id="COG0027">
    <property type="taxonomic scope" value="Bacteria"/>
</dbReference>
<dbReference type="HOGENOM" id="CLU_011534_1_3_6"/>
<dbReference type="OMA" id="GMVTMIT"/>
<dbReference type="UniPathway" id="UPA00074">
    <property type="reaction ID" value="UER00127"/>
</dbReference>
<dbReference type="Proteomes" id="UP000000558">
    <property type="component" value="Chromosome"/>
</dbReference>
<dbReference type="Proteomes" id="UP000002519">
    <property type="component" value="Chromosome"/>
</dbReference>
<dbReference type="GO" id="GO:0005829">
    <property type="term" value="C:cytosol"/>
    <property type="evidence" value="ECO:0007669"/>
    <property type="project" value="TreeGrafter"/>
</dbReference>
<dbReference type="GO" id="GO:0005524">
    <property type="term" value="F:ATP binding"/>
    <property type="evidence" value="ECO:0007669"/>
    <property type="project" value="UniProtKB-UniRule"/>
</dbReference>
<dbReference type="GO" id="GO:0000287">
    <property type="term" value="F:magnesium ion binding"/>
    <property type="evidence" value="ECO:0007669"/>
    <property type="project" value="InterPro"/>
</dbReference>
<dbReference type="GO" id="GO:0043815">
    <property type="term" value="F:phosphoribosylglycinamide formyltransferase 2 activity"/>
    <property type="evidence" value="ECO:0007669"/>
    <property type="project" value="UniProtKB-UniRule"/>
</dbReference>
<dbReference type="GO" id="GO:0004644">
    <property type="term" value="F:phosphoribosylglycinamide formyltransferase activity"/>
    <property type="evidence" value="ECO:0007669"/>
    <property type="project" value="InterPro"/>
</dbReference>
<dbReference type="GO" id="GO:0006189">
    <property type="term" value="P:'de novo' IMP biosynthetic process"/>
    <property type="evidence" value="ECO:0007669"/>
    <property type="project" value="UniProtKB-UniRule"/>
</dbReference>
<dbReference type="FunFam" id="3.30.1490.20:FF:000013">
    <property type="entry name" value="Formate-dependent phosphoribosylglycinamide formyltransferase"/>
    <property type="match status" value="1"/>
</dbReference>
<dbReference type="FunFam" id="3.30.470.20:FF:000027">
    <property type="entry name" value="Formate-dependent phosphoribosylglycinamide formyltransferase"/>
    <property type="match status" value="1"/>
</dbReference>
<dbReference type="FunFam" id="3.40.50.20:FF:000007">
    <property type="entry name" value="Formate-dependent phosphoribosylglycinamide formyltransferase"/>
    <property type="match status" value="1"/>
</dbReference>
<dbReference type="Gene3D" id="3.40.50.20">
    <property type="match status" value="1"/>
</dbReference>
<dbReference type="Gene3D" id="3.30.1490.20">
    <property type="entry name" value="ATP-grasp fold, A domain"/>
    <property type="match status" value="1"/>
</dbReference>
<dbReference type="Gene3D" id="3.30.470.20">
    <property type="entry name" value="ATP-grasp fold, B domain"/>
    <property type="match status" value="1"/>
</dbReference>
<dbReference type="HAMAP" id="MF_01643">
    <property type="entry name" value="PurT"/>
    <property type="match status" value="1"/>
</dbReference>
<dbReference type="InterPro" id="IPR011761">
    <property type="entry name" value="ATP-grasp"/>
</dbReference>
<dbReference type="InterPro" id="IPR003135">
    <property type="entry name" value="ATP-grasp_carboxylate-amine"/>
</dbReference>
<dbReference type="InterPro" id="IPR013815">
    <property type="entry name" value="ATP_grasp_subdomain_1"/>
</dbReference>
<dbReference type="InterPro" id="IPR016185">
    <property type="entry name" value="PreATP-grasp_dom_sf"/>
</dbReference>
<dbReference type="InterPro" id="IPR005862">
    <property type="entry name" value="PurT"/>
</dbReference>
<dbReference type="InterPro" id="IPR054350">
    <property type="entry name" value="PurT/PurK_preATP-grasp"/>
</dbReference>
<dbReference type="InterPro" id="IPR048740">
    <property type="entry name" value="PurT_C"/>
</dbReference>
<dbReference type="InterPro" id="IPR011054">
    <property type="entry name" value="Rudment_hybrid_motif"/>
</dbReference>
<dbReference type="NCBIfam" id="NF006766">
    <property type="entry name" value="PRK09288.1"/>
    <property type="match status" value="1"/>
</dbReference>
<dbReference type="NCBIfam" id="TIGR01142">
    <property type="entry name" value="purT"/>
    <property type="match status" value="1"/>
</dbReference>
<dbReference type="PANTHER" id="PTHR43055">
    <property type="entry name" value="FORMATE-DEPENDENT PHOSPHORIBOSYLGLYCINAMIDE FORMYLTRANSFERASE"/>
    <property type="match status" value="1"/>
</dbReference>
<dbReference type="PANTHER" id="PTHR43055:SF1">
    <property type="entry name" value="FORMATE-DEPENDENT PHOSPHORIBOSYLGLYCINAMIDE FORMYLTRANSFERASE"/>
    <property type="match status" value="1"/>
</dbReference>
<dbReference type="Pfam" id="PF02222">
    <property type="entry name" value="ATP-grasp"/>
    <property type="match status" value="1"/>
</dbReference>
<dbReference type="Pfam" id="PF21244">
    <property type="entry name" value="PurT_C"/>
    <property type="match status" value="1"/>
</dbReference>
<dbReference type="Pfam" id="PF22660">
    <property type="entry name" value="RS_preATP-grasp-like"/>
    <property type="match status" value="1"/>
</dbReference>
<dbReference type="SUPFAM" id="SSF56059">
    <property type="entry name" value="Glutathione synthetase ATP-binding domain-like"/>
    <property type="match status" value="1"/>
</dbReference>
<dbReference type="SUPFAM" id="SSF52440">
    <property type="entry name" value="PreATP-grasp domain"/>
    <property type="match status" value="1"/>
</dbReference>
<dbReference type="SUPFAM" id="SSF51246">
    <property type="entry name" value="Rudiment single hybrid motif"/>
    <property type="match status" value="1"/>
</dbReference>
<dbReference type="PROSITE" id="PS50975">
    <property type="entry name" value="ATP_GRASP"/>
    <property type="match status" value="1"/>
</dbReference>
<keyword id="KW-0067">ATP-binding</keyword>
<keyword id="KW-0436">Ligase</keyword>
<keyword id="KW-0460">Magnesium</keyword>
<keyword id="KW-0479">Metal-binding</keyword>
<keyword id="KW-0547">Nucleotide-binding</keyword>
<keyword id="KW-0658">Purine biosynthesis</keyword>
<keyword id="KW-1185">Reference proteome</keyword>
<sequence>MTLLGTALRPAATRVMLLGSGELGKEVAIECQRLGVEVIAVDRYADAPAMHVAHRSHVINMLDGDALRRVVELEKPHYIVPEIEAIATDMLIQLEEEGLNVVPCARATKLTMNREGIRRLAAEELQLPTSTYRFADSESLFREAVAAIGYPCIVKPVMSSSGKGQTFIRSAEQLAQAWEYAQQGGRAGAGRVIVEGVVKFDFEITLLTVSAVDGVHFCAPVGHRQEDGDYCESWQPQQMSPLALERAQEIARKVVLALGGYGLFGVELFVCGDEVIFSEVSPRPHDTGMVTLISQDLSEFALHVRAFLGLPVGGIRQYGPAASAVILPQLTSQNVTFDNVQNAVGADLQIRLFGKPEIDGSRRLGVALATAESVVDAIERAKHAAGQVKVQG</sequence>
<organism>
    <name type="scientific">Escherichia coli O157:H7</name>
    <dbReference type="NCBI Taxonomy" id="83334"/>
    <lineage>
        <taxon>Bacteria</taxon>
        <taxon>Pseudomonadati</taxon>
        <taxon>Pseudomonadota</taxon>
        <taxon>Gammaproteobacteria</taxon>
        <taxon>Enterobacterales</taxon>
        <taxon>Enterobacteriaceae</taxon>
        <taxon>Escherichia</taxon>
    </lineage>
</organism>
<evidence type="ECO:0000255" key="1">
    <source>
        <dbReference type="HAMAP-Rule" id="MF_01643"/>
    </source>
</evidence>
<accession>Q8XCJ9</accession>
<accession>Q7AD72</accession>
<feature type="chain" id="PRO_0000319163" description="Formate-dependent phosphoribosylglycinamide formyltransferase">
    <location>
        <begin position="1"/>
        <end position="392"/>
    </location>
</feature>
<feature type="domain" description="ATP-grasp" evidence="1">
    <location>
        <begin position="119"/>
        <end position="308"/>
    </location>
</feature>
<feature type="binding site" evidence="1">
    <location>
        <begin position="22"/>
        <end position="23"/>
    </location>
    <ligand>
        <name>N(1)-(5-phospho-beta-D-ribosyl)glycinamide</name>
        <dbReference type="ChEBI" id="CHEBI:143788"/>
    </ligand>
</feature>
<feature type="binding site" evidence="1">
    <location>
        <position position="82"/>
    </location>
    <ligand>
        <name>N(1)-(5-phospho-beta-D-ribosyl)glycinamide</name>
        <dbReference type="ChEBI" id="CHEBI:143788"/>
    </ligand>
</feature>
<feature type="binding site" evidence="1">
    <location>
        <position position="114"/>
    </location>
    <ligand>
        <name>ATP</name>
        <dbReference type="ChEBI" id="CHEBI:30616"/>
    </ligand>
</feature>
<feature type="binding site" evidence="1">
    <location>
        <position position="155"/>
    </location>
    <ligand>
        <name>ATP</name>
        <dbReference type="ChEBI" id="CHEBI:30616"/>
    </ligand>
</feature>
<feature type="binding site" evidence="1">
    <location>
        <begin position="160"/>
        <end position="165"/>
    </location>
    <ligand>
        <name>ATP</name>
        <dbReference type="ChEBI" id="CHEBI:30616"/>
    </ligand>
</feature>
<feature type="binding site" evidence="1">
    <location>
        <begin position="195"/>
        <end position="198"/>
    </location>
    <ligand>
        <name>ATP</name>
        <dbReference type="ChEBI" id="CHEBI:30616"/>
    </ligand>
</feature>
<feature type="binding site" evidence="1">
    <location>
        <position position="203"/>
    </location>
    <ligand>
        <name>ATP</name>
        <dbReference type="ChEBI" id="CHEBI:30616"/>
    </ligand>
</feature>
<feature type="binding site" evidence="1">
    <location>
        <position position="267"/>
    </location>
    <ligand>
        <name>Mg(2+)</name>
        <dbReference type="ChEBI" id="CHEBI:18420"/>
    </ligand>
</feature>
<feature type="binding site" evidence="1">
    <location>
        <position position="279"/>
    </location>
    <ligand>
        <name>Mg(2+)</name>
        <dbReference type="ChEBI" id="CHEBI:18420"/>
    </ligand>
</feature>
<feature type="binding site" evidence="1">
    <location>
        <position position="286"/>
    </location>
    <ligand>
        <name>N(1)-(5-phospho-beta-D-ribosyl)glycinamide</name>
        <dbReference type="ChEBI" id="CHEBI:143788"/>
    </ligand>
</feature>
<feature type="binding site" evidence="1">
    <location>
        <position position="355"/>
    </location>
    <ligand>
        <name>N(1)-(5-phospho-beta-D-ribosyl)glycinamide</name>
        <dbReference type="ChEBI" id="CHEBI:143788"/>
    </ligand>
</feature>
<feature type="binding site" evidence="1">
    <location>
        <begin position="362"/>
        <end position="363"/>
    </location>
    <ligand>
        <name>N(1)-(5-phospho-beta-D-ribosyl)glycinamide</name>
        <dbReference type="ChEBI" id="CHEBI:143788"/>
    </ligand>
</feature>
<protein>
    <recommendedName>
        <fullName evidence="1">Formate-dependent phosphoribosylglycinamide formyltransferase</fullName>
        <ecNumber evidence="1">6.3.1.21</ecNumber>
    </recommendedName>
    <alternativeName>
        <fullName evidence="1">5'-phosphoribosylglycinamide transformylase 2</fullName>
    </alternativeName>
    <alternativeName>
        <fullName evidence="1">Formate-dependent GAR transformylase</fullName>
    </alternativeName>
    <alternativeName>
        <fullName evidence="1">GAR transformylase 2</fullName>
        <shortName evidence="1">GART 2</shortName>
    </alternativeName>
    <alternativeName>
        <fullName evidence="1">Non-folate glycinamide ribonucleotide transformylase</fullName>
    </alternativeName>
    <alternativeName>
        <fullName evidence="1">Phosphoribosylglycinamide formyltransferase 2</fullName>
    </alternativeName>
</protein>